<accession>A6SMQ7</accession>
<accession>A0A384K4L8</accession>
<keyword id="KW-0143">Chaperone</keyword>
<keyword id="KW-0539">Nucleus</keyword>
<keyword id="KW-1185">Reference proteome</keyword>
<dbReference type="EMBL" id="CP009819">
    <property type="protein sequence ID" value="ATZ57701.1"/>
    <property type="molecule type" value="Genomic_DNA"/>
</dbReference>
<dbReference type="RefSeq" id="XP_001547437.1">
    <property type="nucleotide sequence ID" value="XM_001547387.1"/>
</dbReference>
<dbReference type="SMR" id="A6SMQ7"/>
<dbReference type="EnsemblFungi" id="Bcin15g02500.1">
    <property type="protein sequence ID" value="Bcin15p02500.1"/>
    <property type="gene ID" value="Bcin15g02500"/>
</dbReference>
<dbReference type="GeneID" id="5427902"/>
<dbReference type="KEGG" id="bfu:BCIN_15g02500"/>
<dbReference type="VEuPathDB" id="FungiDB:Bcin15g02500"/>
<dbReference type="OMA" id="MEGVQDP"/>
<dbReference type="Proteomes" id="UP000001798">
    <property type="component" value="Chromosome bcin15"/>
</dbReference>
<dbReference type="GO" id="GO:0005634">
    <property type="term" value="C:nucleus"/>
    <property type="evidence" value="ECO:0007669"/>
    <property type="project" value="UniProtKB-SubCell"/>
</dbReference>
<dbReference type="InterPro" id="IPR019098">
    <property type="entry name" value="Histone_chaperone_domain_CHZ"/>
</dbReference>
<dbReference type="Pfam" id="PF09649">
    <property type="entry name" value="CHZ"/>
    <property type="match status" value="1"/>
</dbReference>
<dbReference type="SMART" id="SM01082">
    <property type="entry name" value="CHZ"/>
    <property type="match status" value="1"/>
</dbReference>
<comment type="function">
    <text evidence="1">Forms a chaperone-bound H2A.Z-H2B complex that acts as a source for SWR1 complex-dependent H2A to H2A.Z histone replacement in chromatin.</text>
</comment>
<comment type="subunit">
    <text evidence="1">Forms a heterotrimer with H2A.Z-H2B, stabilizing the association of the histone dimer. Also, with a lower affinity, forms a heterotrimer with H2A-H2B (By similarity).</text>
</comment>
<comment type="subcellular location">
    <subcellularLocation>
        <location evidence="1">Nucleus</location>
    </subcellularLocation>
</comment>
<comment type="similarity">
    <text evidence="3">Belongs to the CHZ1 family.</text>
</comment>
<name>CHZ1_BOTFB</name>
<proteinExistence type="inferred from homology"/>
<organism>
    <name type="scientific">Botryotinia fuckeliana (strain B05.10)</name>
    <name type="common">Noble rot fungus</name>
    <name type="synonym">Botrytis cinerea</name>
    <dbReference type="NCBI Taxonomy" id="332648"/>
    <lineage>
        <taxon>Eukaryota</taxon>
        <taxon>Fungi</taxon>
        <taxon>Dikarya</taxon>
        <taxon>Ascomycota</taxon>
        <taxon>Pezizomycotina</taxon>
        <taxon>Leotiomycetes</taxon>
        <taxon>Helotiales</taxon>
        <taxon>Sclerotiniaceae</taxon>
        <taxon>Botrytis</taxon>
    </lineage>
</organism>
<evidence type="ECO:0000250" key="1"/>
<evidence type="ECO:0000256" key="2">
    <source>
        <dbReference type="SAM" id="MobiDB-lite"/>
    </source>
</evidence>
<evidence type="ECO:0000305" key="3"/>
<reference key="1">
    <citation type="journal article" date="2011" name="PLoS Genet.">
        <title>Genomic analysis of the necrotrophic fungal pathogens Sclerotinia sclerotiorum and Botrytis cinerea.</title>
        <authorList>
            <person name="Amselem J."/>
            <person name="Cuomo C.A."/>
            <person name="van Kan J.A.L."/>
            <person name="Viaud M."/>
            <person name="Benito E.P."/>
            <person name="Couloux A."/>
            <person name="Coutinho P.M."/>
            <person name="de Vries R.P."/>
            <person name="Dyer P.S."/>
            <person name="Fillinger S."/>
            <person name="Fournier E."/>
            <person name="Gout L."/>
            <person name="Hahn M."/>
            <person name="Kohn L."/>
            <person name="Lapalu N."/>
            <person name="Plummer K.M."/>
            <person name="Pradier J.-M."/>
            <person name="Quevillon E."/>
            <person name="Sharon A."/>
            <person name="Simon A."/>
            <person name="ten Have A."/>
            <person name="Tudzynski B."/>
            <person name="Tudzynski P."/>
            <person name="Wincker P."/>
            <person name="Andrew M."/>
            <person name="Anthouard V."/>
            <person name="Beever R.E."/>
            <person name="Beffa R."/>
            <person name="Benoit I."/>
            <person name="Bouzid O."/>
            <person name="Brault B."/>
            <person name="Chen Z."/>
            <person name="Choquer M."/>
            <person name="Collemare J."/>
            <person name="Cotton P."/>
            <person name="Danchin E.G."/>
            <person name="Da Silva C."/>
            <person name="Gautier A."/>
            <person name="Giraud C."/>
            <person name="Giraud T."/>
            <person name="Gonzalez C."/>
            <person name="Grossetete S."/>
            <person name="Gueldener U."/>
            <person name="Henrissat B."/>
            <person name="Howlett B.J."/>
            <person name="Kodira C."/>
            <person name="Kretschmer M."/>
            <person name="Lappartient A."/>
            <person name="Leroch M."/>
            <person name="Levis C."/>
            <person name="Mauceli E."/>
            <person name="Neuveglise C."/>
            <person name="Oeser B."/>
            <person name="Pearson M."/>
            <person name="Poulain J."/>
            <person name="Poussereau N."/>
            <person name="Quesneville H."/>
            <person name="Rascle C."/>
            <person name="Schumacher J."/>
            <person name="Segurens B."/>
            <person name="Sexton A."/>
            <person name="Silva E."/>
            <person name="Sirven C."/>
            <person name="Soanes D.M."/>
            <person name="Talbot N.J."/>
            <person name="Templeton M."/>
            <person name="Yandava C."/>
            <person name="Yarden O."/>
            <person name="Zeng Q."/>
            <person name="Rollins J.A."/>
            <person name="Lebrun M.-H."/>
            <person name="Dickman M."/>
        </authorList>
    </citation>
    <scope>NUCLEOTIDE SEQUENCE [LARGE SCALE GENOMIC DNA]</scope>
    <source>
        <strain>B05.10</strain>
    </source>
</reference>
<reference key="2">
    <citation type="journal article" date="2012" name="Eukaryot. Cell">
        <title>Genome update of Botrytis cinerea strains B05.10 and T4.</title>
        <authorList>
            <person name="Staats M."/>
            <person name="van Kan J.A.L."/>
        </authorList>
    </citation>
    <scope>NUCLEOTIDE SEQUENCE [LARGE SCALE GENOMIC DNA]</scope>
    <scope>GENOME REANNOTATION</scope>
    <source>
        <strain>B05.10</strain>
    </source>
</reference>
<reference key="3">
    <citation type="journal article" date="2017" name="Mol. Plant Pathol.">
        <title>A gapless genome sequence of the fungus Botrytis cinerea.</title>
        <authorList>
            <person name="van Kan J.A.L."/>
            <person name="Stassen J.H.M."/>
            <person name="Mosbach A."/>
            <person name="van der Lee T.A.J."/>
            <person name="Faino L."/>
            <person name="Farmer A.D."/>
            <person name="Papasotiriou D.G."/>
            <person name="Zhou S."/>
            <person name="Seidl M.F."/>
            <person name="Cottam E."/>
            <person name="Edel D."/>
            <person name="Hahn M."/>
            <person name="Schwartz D.C."/>
            <person name="Dietrich R.A."/>
            <person name="Widdison S."/>
            <person name="Scalliet G."/>
        </authorList>
    </citation>
    <scope>NUCLEOTIDE SEQUENCE [LARGE SCALE GENOMIC DNA]</scope>
    <scope>GENOME REANNOTATION</scope>
    <source>
        <strain>B05.10</strain>
    </source>
</reference>
<feature type="chain" id="PRO_0000330204" description="Histone H2A.Z-specific chaperone chz1">
    <location>
        <begin position="1"/>
        <end position="111"/>
    </location>
</feature>
<feature type="region of interest" description="Disordered" evidence="2">
    <location>
        <begin position="1"/>
        <end position="111"/>
    </location>
</feature>
<feature type="compositionally biased region" description="Acidic residues" evidence="2">
    <location>
        <begin position="31"/>
        <end position="59"/>
    </location>
</feature>
<feature type="compositionally biased region" description="Acidic residues" evidence="2">
    <location>
        <begin position="88"/>
        <end position="111"/>
    </location>
</feature>
<protein>
    <recommendedName>
        <fullName>Histone H2A.Z-specific chaperone chz1</fullName>
    </recommendedName>
</protein>
<sequence length="111" mass="11652">MSAQTGSAAAIGDKGKGKSAAEPQDVTMGEGGDDSSSEEEVDDDAPPPAEEVEEEASDNEIDKSNIIQGRRTRGKQIDFAAAAKDLPADDDEDEDDDFQSEGEEDDEMGGN</sequence>
<gene>
    <name type="primary">chz1</name>
    <name type="ORF">BC1G_14172</name>
    <name type="ORF">BCIN_15g02500</name>
</gene>